<name>NADB2_RALN1</name>
<accession>Q8XQG4</accession>
<dbReference type="EC" id="1.4.3.16" evidence="1"/>
<dbReference type="EMBL" id="AL646053">
    <property type="protein sequence ID" value="CAD18414.1"/>
    <property type="molecule type" value="Genomic_DNA"/>
</dbReference>
<dbReference type="RefSeq" id="WP_011004545.1">
    <property type="nucleotide sequence ID" value="NC_003296.1"/>
</dbReference>
<dbReference type="SMR" id="Q8XQG4"/>
<dbReference type="STRING" id="267608.RSp1263"/>
<dbReference type="EnsemblBacteria" id="CAD18414">
    <property type="protein sequence ID" value="CAD18414"/>
    <property type="gene ID" value="RSp1263"/>
</dbReference>
<dbReference type="KEGG" id="rso:RSp1263"/>
<dbReference type="PATRIC" id="fig|267608.8.peg.4755"/>
<dbReference type="eggNOG" id="COG0029">
    <property type="taxonomic scope" value="Bacteria"/>
</dbReference>
<dbReference type="HOGENOM" id="CLU_014312_3_0_4"/>
<dbReference type="UniPathway" id="UPA00253">
    <property type="reaction ID" value="UER00326"/>
</dbReference>
<dbReference type="Proteomes" id="UP000001436">
    <property type="component" value="Plasmid megaplasmid Rsp"/>
</dbReference>
<dbReference type="GO" id="GO:0005737">
    <property type="term" value="C:cytoplasm"/>
    <property type="evidence" value="ECO:0007669"/>
    <property type="project" value="UniProtKB-SubCell"/>
</dbReference>
<dbReference type="GO" id="GO:0008734">
    <property type="term" value="F:L-aspartate oxidase activity"/>
    <property type="evidence" value="ECO:0007669"/>
    <property type="project" value="UniProtKB-EC"/>
</dbReference>
<dbReference type="GO" id="GO:0000166">
    <property type="term" value="F:nucleotide binding"/>
    <property type="evidence" value="ECO:0007669"/>
    <property type="project" value="UniProtKB-KW"/>
</dbReference>
<dbReference type="GO" id="GO:0009435">
    <property type="term" value="P:NAD biosynthetic process"/>
    <property type="evidence" value="ECO:0007669"/>
    <property type="project" value="UniProtKB-UniPathway"/>
</dbReference>
<dbReference type="FunFam" id="3.90.700.10:FF:000002">
    <property type="entry name" value="L-aspartate oxidase"/>
    <property type="match status" value="1"/>
</dbReference>
<dbReference type="Gene3D" id="3.50.50.60">
    <property type="entry name" value="FAD/NAD(P)-binding domain"/>
    <property type="match status" value="1"/>
</dbReference>
<dbReference type="Gene3D" id="1.20.58.100">
    <property type="entry name" value="Fumarate reductase/succinate dehydrogenase flavoprotein-like, C-terminal domain"/>
    <property type="match status" value="1"/>
</dbReference>
<dbReference type="Gene3D" id="3.90.700.10">
    <property type="entry name" value="Succinate dehydrogenase/fumarate reductase flavoprotein, catalytic domain"/>
    <property type="match status" value="1"/>
</dbReference>
<dbReference type="InterPro" id="IPR003953">
    <property type="entry name" value="FAD-dep_OxRdtase_2_FAD-bd"/>
</dbReference>
<dbReference type="InterPro" id="IPR036188">
    <property type="entry name" value="FAD/NAD-bd_sf"/>
</dbReference>
<dbReference type="InterPro" id="IPR037099">
    <property type="entry name" value="Fum_R/Succ_DH_flav-like_C_sf"/>
</dbReference>
<dbReference type="InterPro" id="IPR015939">
    <property type="entry name" value="Fum_Rdtase/Succ_DH_flav-like_C"/>
</dbReference>
<dbReference type="InterPro" id="IPR005288">
    <property type="entry name" value="NadB"/>
</dbReference>
<dbReference type="InterPro" id="IPR027477">
    <property type="entry name" value="Succ_DH/fumarate_Rdtase_cat_sf"/>
</dbReference>
<dbReference type="NCBIfam" id="TIGR00551">
    <property type="entry name" value="nadB"/>
    <property type="match status" value="1"/>
</dbReference>
<dbReference type="PANTHER" id="PTHR42716">
    <property type="entry name" value="L-ASPARTATE OXIDASE"/>
    <property type="match status" value="1"/>
</dbReference>
<dbReference type="PANTHER" id="PTHR42716:SF2">
    <property type="entry name" value="L-ASPARTATE OXIDASE, CHLOROPLASTIC"/>
    <property type="match status" value="1"/>
</dbReference>
<dbReference type="Pfam" id="PF00890">
    <property type="entry name" value="FAD_binding_2"/>
    <property type="match status" value="1"/>
</dbReference>
<dbReference type="Pfam" id="PF02910">
    <property type="entry name" value="Succ_DH_flav_C"/>
    <property type="match status" value="1"/>
</dbReference>
<dbReference type="SUPFAM" id="SSF51905">
    <property type="entry name" value="FAD/NAD(P)-binding domain"/>
    <property type="match status" value="1"/>
</dbReference>
<dbReference type="SUPFAM" id="SSF46977">
    <property type="entry name" value="Succinate dehydrogenase/fumarate reductase flavoprotein C-terminal domain"/>
    <property type="match status" value="1"/>
</dbReference>
<dbReference type="SUPFAM" id="SSF56425">
    <property type="entry name" value="Succinate dehydrogenase/fumarate reductase flavoprotein, catalytic domain"/>
    <property type="match status" value="1"/>
</dbReference>
<gene>
    <name type="primary">nadB2</name>
    <name type="ordered locus">RSp1263</name>
    <name type="ORF">RS05308</name>
</gene>
<reference key="1">
    <citation type="journal article" date="2002" name="Nature">
        <title>Genome sequence of the plant pathogen Ralstonia solanacearum.</title>
        <authorList>
            <person name="Salanoubat M."/>
            <person name="Genin S."/>
            <person name="Artiguenave F."/>
            <person name="Gouzy J."/>
            <person name="Mangenot S."/>
            <person name="Arlat M."/>
            <person name="Billault A."/>
            <person name="Brottier P."/>
            <person name="Camus J.-C."/>
            <person name="Cattolico L."/>
            <person name="Chandler M."/>
            <person name="Choisne N."/>
            <person name="Claudel-Renard C."/>
            <person name="Cunnac S."/>
            <person name="Demange N."/>
            <person name="Gaspin C."/>
            <person name="Lavie M."/>
            <person name="Moisan A."/>
            <person name="Robert C."/>
            <person name="Saurin W."/>
            <person name="Schiex T."/>
            <person name="Siguier P."/>
            <person name="Thebault P."/>
            <person name="Whalen M."/>
            <person name="Wincker P."/>
            <person name="Levy M."/>
            <person name="Weissenbach J."/>
            <person name="Boucher C.A."/>
        </authorList>
    </citation>
    <scope>NUCLEOTIDE SEQUENCE [LARGE SCALE GENOMIC DNA]</scope>
    <source>
        <strain>ATCC BAA-1114 / GMI1000</strain>
    </source>
</reference>
<keyword id="KW-0963">Cytoplasm</keyword>
<keyword id="KW-0274">FAD</keyword>
<keyword id="KW-0285">Flavoprotein</keyword>
<keyword id="KW-0547">Nucleotide-binding</keyword>
<keyword id="KW-0560">Oxidoreductase</keyword>
<keyword id="KW-0614">Plasmid</keyword>
<keyword id="KW-0662">Pyridine nucleotide biosynthesis</keyword>
<keyword id="KW-1185">Reference proteome</keyword>
<geneLocation type="plasmid">
    <name>megaplasmid Rsp</name>
</geneLocation>
<comment type="function">
    <text evidence="1">Catalyzes the oxidation of L-aspartate to iminoaspartate, the first step in the de novo biosynthesis of NAD(+).</text>
</comment>
<comment type="catalytic activity">
    <reaction evidence="1">
        <text>L-aspartate + O2 = iminosuccinate + H2O2</text>
        <dbReference type="Rhea" id="RHEA:25876"/>
        <dbReference type="ChEBI" id="CHEBI:15379"/>
        <dbReference type="ChEBI" id="CHEBI:16240"/>
        <dbReference type="ChEBI" id="CHEBI:29991"/>
        <dbReference type="ChEBI" id="CHEBI:77875"/>
        <dbReference type="EC" id="1.4.3.16"/>
    </reaction>
    <physiologicalReaction direction="left-to-right" evidence="1">
        <dbReference type="Rhea" id="RHEA:25877"/>
    </physiologicalReaction>
</comment>
<comment type="cofactor">
    <cofactor evidence="1">
        <name>FAD</name>
        <dbReference type="ChEBI" id="CHEBI:57692"/>
    </cofactor>
    <text evidence="1">Binds 1 FAD per subunit.</text>
</comment>
<comment type="pathway">
    <text evidence="1">Cofactor biosynthesis; NAD(+) biosynthesis; iminoaspartate from L-aspartate (oxidase route): step 1/1.</text>
</comment>
<comment type="subcellular location">
    <subcellularLocation>
        <location evidence="1">Cytoplasm</location>
    </subcellularLocation>
</comment>
<comment type="similarity">
    <text evidence="2">Belongs to the FAD-dependent oxidoreductase 2 family. NadB subfamily.</text>
</comment>
<protein>
    <recommendedName>
        <fullName evidence="1">L-aspartate oxidase 2</fullName>
        <shortName evidence="1">LASPO 2</shortName>
        <ecNumber evidence="1">1.4.3.16</ecNumber>
    </recommendedName>
    <alternativeName>
        <fullName>Quinolinate synthase B 2</fullName>
    </alternativeName>
</protein>
<sequence>MTSGQSKHEIRDMKFDVLVVGEGLAALTLLLHLPPSLKIGVISRNKYDEPSSYWAQGGISAVFSTDDDHDKHIRDTLLAGDGLCDEAAVRQIVCEGGDVLRWLIDQGVPFTREDGEIHLTREGGHSERRVAHVDDMTGRGIMRALQAKVAQLPNVIWIRQYEAVELLSDGQAVSGVIAESLADGEVTVFSAPTVVLAAGGLTGLYQYATNPHASKGEAIAMAWRAGATIENLEFVQFHPTAFQIEGRVISLITEAVRGEGGLLYNVANERFMPGYSSQQELAPRDVVARAIYSEMQAHGTSHVWLDITHQGTAFVEQHFPNLVEITRAHGCDLSQHRVPVSPAAHYTCGGIGADVAGRTNIEGLYAIGEVANCGLHGANRLASNSLLECVVMGKACAQSVTDTAGSASRLRLTLPERIETPFHPNLLADLRAILWNHAGIVRSNTGLEIGLQNMAQLQERHASVLPYGQALRAQNIFDAAHLVLLSAAARKESRGGHFNKDHADKAEAQTTQIPGVPVNFWAAGENASHAAQLAAA</sequence>
<evidence type="ECO:0000250" key="1">
    <source>
        <dbReference type="UniProtKB" id="P10902"/>
    </source>
</evidence>
<evidence type="ECO:0000305" key="2"/>
<proteinExistence type="inferred from homology"/>
<feature type="chain" id="PRO_0000184395" description="L-aspartate oxidase 2">
    <location>
        <begin position="1"/>
        <end position="536"/>
    </location>
</feature>
<feature type="active site" description="Proton donor/acceptor" evidence="1">
    <location>
        <position position="284"/>
    </location>
</feature>
<feature type="binding site" evidence="1">
    <location>
        <begin position="22"/>
        <end position="25"/>
    </location>
    <ligand>
        <name>FAD</name>
        <dbReference type="ChEBI" id="CHEBI:57692"/>
    </ligand>
</feature>
<feature type="binding site" evidence="1">
    <location>
        <begin position="51"/>
        <end position="58"/>
    </location>
    <ligand>
        <name>FAD</name>
        <dbReference type="ChEBI" id="CHEBI:57692"/>
    </ligand>
</feature>
<feature type="binding site" evidence="1">
    <location>
        <position position="369"/>
    </location>
    <ligand>
        <name>FAD</name>
        <dbReference type="ChEBI" id="CHEBI:57692"/>
    </ligand>
</feature>
<feature type="binding site" evidence="1">
    <location>
        <begin position="385"/>
        <end position="386"/>
    </location>
    <ligand>
        <name>FAD</name>
        <dbReference type="ChEBI" id="CHEBI:57692"/>
    </ligand>
</feature>
<feature type="site" description="Important in orienting the L-aspartate substrate" evidence="1">
    <location>
        <position position="122"/>
    </location>
</feature>
<organism>
    <name type="scientific">Ralstonia nicotianae (strain ATCC BAA-1114 / GMI1000)</name>
    <name type="common">Ralstonia solanacearum</name>
    <dbReference type="NCBI Taxonomy" id="267608"/>
    <lineage>
        <taxon>Bacteria</taxon>
        <taxon>Pseudomonadati</taxon>
        <taxon>Pseudomonadota</taxon>
        <taxon>Betaproteobacteria</taxon>
        <taxon>Burkholderiales</taxon>
        <taxon>Burkholderiaceae</taxon>
        <taxon>Ralstonia</taxon>
        <taxon>Ralstonia solanacearum species complex</taxon>
    </lineage>
</organism>